<protein>
    <recommendedName>
        <fullName evidence="1">Large ribosomal subunit protein uL11</fullName>
    </recommendedName>
    <alternativeName>
        <fullName evidence="3">50S ribosomal protein L11</fullName>
    </alternativeName>
</protein>
<proteinExistence type="inferred from homology"/>
<reference key="1">
    <citation type="submission" date="2008-08" db="EMBL/GenBank/DDBJ databases">
        <title>Complete sequence of Anaeromyxobacter sp. K.</title>
        <authorList>
            <consortium name="US DOE Joint Genome Institute"/>
            <person name="Lucas S."/>
            <person name="Copeland A."/>
            <person name="Lapidus A."/>
            <person name="Glavina del Rio T."/>
            <person name="Dalin E."/>
            <person name="Tice H."/>
            <person name="Bruce D."/>
            <person name="Goodwin L."/>
            <person name="Pitluck S."/>
            <person name="Saunders E."/>
            <person name="Brettin T."/>
            <person name="Detter J.C."/>
            <person name="Han C."/>
            <person name="Larimer F."/>
            <person name="Land M."/>
            <person name="Hauser L."/>
            <person name="Kyrpides N."/>
            <person name="Ovchinnikiva G."/>
            <person name="Beliaev A."/>
        </authorList>
    </citation>
    <scope>NUCLEOTIDE SEQUENCE [LARGE SCALE GENOMIC DNA]</scope>
    <source>
        <strain>K</strain>
    </source>
</reference>
<comment type="function">
    <text evidence="1">Forms part of the ribosomal stalk which helps the ribosome interact with GTP-bound translation factors.</text>
</comment>
<comment type="subunit">
    <text evidence="1">Part of the ribosomal stalk of the 50S ribosomal subunit. Interacts with L10 and the large rRNA to form the base of the stalk. L10 forms an elongated spine to which L12 dimers bind in a sequential fashion forming a multimeric L10(L12)X complex.</text>
</comment>
<comment type="PTM">
    <text evidence="1">One or more lysine residues are methylated.</text>
</comment>
<comment type="similarity">
    <text evidence="1">Belongs to the universal ribosomal protein uL11 family.</text>
</comment>
<sequence>MKKVTGQIKLQLPAGKANPAPPVGPALGQHGVNIMEFCKQFNAATQAQAKEALIIPVIITVYQDRSFTFVLKTPPAAILLKKAAGLHTEKKKGSGAHKPGKEKVGQVTRKQVEQIAKTKMQDMTAGTLEAAMRTVEGTALSMGIEIVG</sequence>
<evidence type="ECO:0000255" key="1">
    <source>
        <dbReference type="HAMAP-Rule" id="MF_00736"/>
    </source>
</evidence>
<evidence type="ECO:0000256" key="2">
    <source>
        <dbReference type="SAM" id="MobiDB-lite"/>
    </source>
</evidence>
<evidence type="ECO:0000305" key="3"/>
<feature type="chain" id="PRO_1000132859" description="Large ribosomal subunit protein uL11">
    <location>
        <begin position="1"/>
        <end position="148"/>
    </location>
</feature>
<feature type="region of interest" description="Disordered" evidence="2">
    <location>
        <begin position="89"/>
        <end position="108"/>
    </location>
</feature>
<gene>
    <name evidence="1" type="primary">rplK</name>
    <name type="ordered locus">AnaeK_2275</name>
</gene>
<name>RL11_ANASK</name>
<keyword id="KW-0488">Methylation</keyword>
<keyword id="KW-0687">Ribonucleoprotein</keyword>
<keyword id="KW-0689">Ribosomal protein</keyword>
<keyword id="KW-0694">RNA-binding</keyword>
<keyword id="KW-0699">rRNA-binding</keyword>
<accession>B4UDT6</accession>
<dbReference type="EMBL" id="CP001131">
    <property type="protein sequence ID" value="ACG73502.1"/>
    <property type="molecule type" value="Genomic_DNA"/>
</dbReference>
<dbReference type="RefSeq" id="WP_011420644.1">
    <property type="nucleotide sequence ID" value="NC_011145.1"/>
</dbReference>
<dbReference type="SMR" id="B4UDT6"/>
<dbReference type="KEGG" id="ank:AnaeK_2275"/>
<dbReference type="HOGENOM" id="CLU_074237_2_0_7"/>
<dbReference type="OrthoDB" id="9802408at2"/>
<dbReference type="Proteomes" id="UP000001871">
    <property type="component" value="Chromosome"/>
</dbReference>
<dbReference type="GO" id="GO:0022625">
    <property type="term" value="C:cytosolic large ribosomal subunit"/>
    <property type="evidence" value="ECO:0007669"/>
    <property type="project" value="TreeGrafter"/>
</dbReference>
<dbReference type="GO" id="GO:0070180">
    <property type="term" value="F:large ribosomal subunit rRNA binding"/>
    <property type="evidence" value="ECO:0007669"/>
    <property type="project" value="UniProtKB-UniRule"/>
</dbReference>
<dbReference type="GO" id="GO:0003735">
    <property type="term" value="F:structural constituent of ribosome"/>
    <property type="evidence" value="ECO:0007669"/>
    <property type="project" value="InterPro"/>
</dbReference>
<dbReference type="GO" id="GO:0006412">
    <property type="term" value="P:translation"/>
    <property type="evidence" value="ECO:0007669"/>
    <property type="project" value="UniProtKB-UniRule"/>
</dbReference>
<dbReference type="CDD" id="cd00349">
    <property type="entry name" value="Ribosomal_L11"/>
    <property type="match status" value="1"/>
</dbReference>
<dbReference type="FunFam" id="1.10.10.250:FF:000001">
    <property type="entry name" value="50S ribosomal protein L11"/>
    <property type="match status" value="1"/>
</dbReference>
<dbReference type="FunFam" id="3.30.1550.10:FF:000001">
    <property type="entry name" value="50S ribosomal protein L11"/>
    <property type="match status" value="1"/>
</dbReference>
<dbReference type="Gene3D" id="1.10.10.250">
    <property type="entry name" value="Ribosomal protein L11, C-terminal domain"/>
    <property type="match status" value="1"/>
</dbReference>
<dbReference type="Gene3D" id="3.30.1550.10">
    <property type="entry name" value="Ribosomal protein L11/L12, N-terminal domain"/>
    <property type="match status" value="1"/>
</dbReference>
<dbReference type="HAMAP" id="MF_00736">
    <property type="entry name" value="Ribosomal_uL11"/>
    <property type="match status" value="1"/>
</dbReference>
<dbReference type="InterPro" id="IPR000911">
    <property type="entry name" value="Ribosomal_uL11"/>
</dbReference>
<dbReference type="InterPro" id="IPR006519">
    <property type="entry name" value="Ribosomal_uL11_bac-typ"/>
</dbReference>
<dbReference type="InterPro" id="IPR020783">
    <property type="entry name" value="Ribosomal_uL11_C"/>
</dbReference>
<dbReference type="InterPro" id="IPR036769">
    <property type="entry name" value="Ribosomal_uL11_C_sf"/>
</dbReference>
<dbReference type="InterPro" id="IPR020785">
    <property type="entry name" value="Ribosomal_uL11_CS"/>
</dbReference>
<dbReference type="InterPro" id="IPR020784">
    <property type="entry name" value="Ribosomal_uL11_N"/>
</dbReference>
<dbReference type="InterPro" id="IPR036796">
    <property type="entry name" value="Ribosomal_uL11_N_sf"/>
</dbReference>
<dbReference type="NCBIfam" id="TIGR01632">
    <property type="entry name" value="L11_bact"/>
    <property type="match status" value="1"/>
</dbReference>
<dbReference type="PANTHER" id="PTHR11661">
    <property type="entry name" value="60S RIBOSOMAL PROTEIN L12"/>
    <property type="match status" value="1"/>
</dbReference>
<dbReference type="PANTHER" id="PTHR11661:SF1">
    <property type="entry name" value="LARGE RIBOSOMAL SUBUNIT PROTEIN UL11M"/>
    <property type="match status" value="1"/>
</dbReference>
<dbReference type="Pfam" id="PF00298">
    <property type="entry name" value="Ribosomal_L11"/>
    <property type="match status" value="1"/>
</dbReference>
<dbReference type="Pfam" id="PF03946">
    <property type="entry name" value="Ribosomal_L11_N"/>
    <property type="match status" value="1"/>
</dbReference>
<dbReference type="SMART" id="SM00649">
    <property type="entry name" value="RL11"/>
    <property type="match status" value="1"/>
</dbReference>
<dbReference type="SUPFAM" id="SSF54747">
    <property type="entry name" value="Ribosomal L11/L12e N-terminal domain"/>
    <property type="match status" value="1"/>
</dbReference>
<dbReference type="SUPFAM" id="SSF46906">
    <property type="entry name" value="Ribosomal protein L11, C-terminal domain"/>
    <property type="match status" value="1"/>
</dbReference>
<dbReference type="PROSITE" id="PS00359">
    <property type="entry name" value="RIBOSOMAL_L11"/>
    <property type="match status" value="1"/>
</dbReference>
<organism>
    <name type="scientific">Anaeromyxobacter sp. (strain K)</name>
    <dbReference type="NCBI Taxonomy" id="447217"/>
    <lineage>
        <taxon>Bacteria</taxon>
        <taxon>Pseudomonadati</taxon>
        <taxon>Myxococcota</taxon>
        <taxon>Myxococcia</taxon>
        <taxon>Myxococcales</taxon>
        <taxon>Cystobacterineae</taxon>
        <taxon>Anaeromyxobacteraceae</taxon>
        <taxon>Anaeromyxobacter</taxon>
    </lineage>
</organism>